<evidence type="ECO:0000255" key="1">
    <source>
        <dbReference type="HAMAP-Rule" id="MF_00537"/>
    </source>
</evidence>
<evidence type="ECO:0000305" key="2"/>
<gene>
    <name evidence="1" type="primary">rpsN</name>
    <name type="ordered locus">Shew_0171</name>
</gene>
<reference key="1">
    <citation type="submission" date="2007-03" db="EMBL/GenBank/DDBJ databases">
        <title>Complete sequence of Shewanella loihica PV-4.</title>
        <authorList>
            <consortium name="US DOE Joint Genome Institute"/>
            <person name="Copeland A."/>
            <person name="Lucas S."/>
            <person name="Lapidus A."/>
            <person name="Barry K."/>
            <person name="Detter J.C."/>
            <person name="Glavina del Rio T."/>
            <person name="Hammon N."/>
            <person name="Israni S."/>
            <person name="Dalin E."/>
            <person name="Tice H."/>
            <person name="Pitluck S."/>
            <person name="Chain P."/>
            <person name="Malfatti S."/>
            <person name="Shin M."/>
            <person name="Vergez L."/>
            <person name="Schmutz J."/>
            <person name="Larimer F."/>
            <person name="Land M."/>
            <person name="Hauser L."/>
            <person name="Kyrpides N."/>
            <person name="Mikhailova N."/>
            <person name="Romine M.F."/>
            <person name="Serres G."/>
            <person name="Fredrickson J."/>
            <person name="Tiedje J."/>
            <person name="Richardson P."/>
        </authorList>
    </citation>
    <scope>NUCLEOTIDE SEQUENCE [LARGE SCALE GENOMIC DNA]</scope>
    <source>
        <strain>ATCC BAA-1088 / PV-4</strain>
    </source>
</reference>
<proteinExistence type="inferred from homology"/>
<accession>A3Q995</accession>
<feature type="chain" id="PRO_1000128576" description="Small ribosomal subunit protein uS14">
    <location>
        <begin position="1"/>
        <end position="101"/>
    </location>
</feature>
<comment type="function">
    <text evidence="1">Binds 16S rRNA, required for the assembly of 30S particles and may also be responsible for determining the conformation of the 16S rRNA at the A site.</text>
</comment>
<comment type="subunit">
    <text evidence="1">Part of the 30S ribosomal subunit. Contacts proteins S3 and S10.</text>
</comment>
<comment type="similarity">
    <text evidence="1">Belongs to the universal ribosomal protein uS14 family.</text>
</comment>
<protein>
    <recommendedName>
        <fullName evidence="1">Small ribosomal subunit protein uS14</fullName>
    </recommendedName>
    <alternativeName>
        <fullName evidence="2">30S ribosomal protein S14</fullName>
    </alternativeName>
</protein>
<name>RS14_SHELP</name>
<organism>
    <name type="scientific">Shewanella loihica (strain ATCC BAA-1088 / PV-4)</name>
    <dbReference type="NCBI Taxonomy" id="323850"/>
    <lineage>
        <taxon>Bacteria</taxon>
        <taxon>Pseudomonadati</taxon>
        <taxon>Pseudomonadota</taxon>
        <taxon>Gammaproteobacteria</taxon>
        <taxon>Alteromonadales</taxon>
        <taxon>Shewanellaceae</taxon>
        <taxon>Shewanella</taxon>
    </lineage>
</organism>
<dbReference type="EMBL" id="CP000606">
    <property type="protein sequence ID" value="ABO22043.1"/>
    <property type="molecule type" value="Genomic_DNA"/>
</dbReference>
<dbReference type="RefSeq" id="WP_011863979.1">
    <property type="nucleotide sequence ID" value="NC_009092.1"/>
</dbReference>
<dbReference type="SMR" id="A3Q995"/>
<dbReference type="STRING" id="323850.Shew_0171"/>
<dbReference type="KEGG" id="slo:Shew_0171"/>
<dbReference type="eggNOG" id="COG0199">
    <property type="taxonomic scope" value="Bacteria"/>
</dbReference>
<dbReference type="HOGENOM" id="CLU_139869_0_1_6"/>
<dbReference type="OrthoDB" id="9810484at2"/>
<dbReference type="Proteomes" id="UP000001558">
    <property type="component" value="Chromosome"/>
</dbReference>
<dbReference type="GO" id="GO:0005737">
    <property type="term" value="C:cytoplasm"/>
    <property type="evidence" value="ECO:0007669"/>
    <property type="project" value="UniProtKB-ARBA"/>
</dbReference>
<dbReference type="GO" id="GO:0015935">
    <property type="term" value="C:small ribosomal subunit"/>
    <property type="evidence" value="ECO:0007669"/>
    <property type="project" value="TreeGrafter"/>
</dbReference>
<dbReference type="GO" id="GO:0019843">
    <property type="term" value="F:rRNA binding"/>
    <property type="evidence" value="ECO:0007669"/>
    <property type="project" value="UniProtKB-UniRule"/>
</dbReference>
<dbReference type="GO" id="GO:0003735">
    <property type="term" value="F:structural constituent of ribosome"/>
    <property type="evidence" value="ECO:0007669"/>
    <property type="project" value="InterPro"/>
</dbReference>
<dbReference type="GO" id="GO:0006412">
    <property type="term" value="P:translation"/>
    <property type="evidence" value="ECO:0007669"/>
    <property type="project" value="UniProtKB-UniRule"/>
</dbReference>
<dbReference type="FunFam" id="1.10.287.1480:FF:000001">
    <property type="entry name" value="30S ribosomal protein S14"/>
    <property type="match status" value="1"/>
</dbReference>
<dbReference type="Gene3D" id="1.10.287.1480">
    <property type="match status" value="1"/>
</dbReference>
<dbReference type="HAMAP" id="MF_00537">
    <property type="entry name" value="Ribosomal_uS14_1"/>
    <property type="match status" value="1"/>
</dbReference>
<dbReference type="InterPro" id="IPR001209">
    <property type="entry name" value="Ribosomal_uS14"/>
</dbReference>
<dbReference type="InterPro" id="IPR023036">
    <property type="entry name" value="Ribosomal_uS14_bac/plastid"/>
</dbReference>
<dbReference type="InterPro" id="IPR018271">
    <property type="entry name" value="Ribosomal_uS14_CS"/>
</dbReference>
<dbReference type="NCBIfam" id="NF006477">
    <property type="entry name" value="PRK08881.1"/>
    <property type="match status" value="1"/>
</dbReference>
<dbReference type="PANTHER" id="PTHR19836">
    <property type="entry name" value="30S RIBOSOMAL PROTEIN S14"/>
    <property type="match status" value="1"/>
</dbReference>
<dbReference type="PANTHER" id="PTHR19836:SF19">
    <property type="entry name" value="SMALL RIBOSOMAL SUBUNIT PROTEIN US14M"/>
    <property type="match status" value="1"/>
</dbReference>
<dbReference type="Pfam" id="PF00253">
    <property type="entry name" value="Ribosomal_S14"/>
    <property type="match status" value="1"/>
</dbReference>
<dbReference type="SUPFAM" id="SSF57716">
    <property type="entry name" value="Glucocorticoid receptor-like (DNA-binding domain)"/>
    <property type="match status" value="1"/>
</dbReference>
<dbReference type="PROSITE" id="PS00527">
    <property type="entry name" value="RIBOSOMAL_S14"/>
    <property type="match status" value="1"/>
</dbReference>
<sequence length="101" mass="11408">MAKSSMKAREAKRAKLVAKYAEKRLALKAIISNPTTSDEDRWDAVLKLQGLPRDSSAARQRNRCSQTGRPHGFLRKFGLSRIKLREATMRGEVPGLRKASW</sequence>
<keyword id="KW-1185">Reference proteome</keyword>
<keyword id="KW-0687">Ribonucleoprotein</keyword>
<keyword id="KW-0689">Ribosomal protein</keyword>
<keyword id="KW-0694">RNA-binding</keyword>
<keyword id="KW-0699">rRNA-binding</keyword>